<sequence>MTLFSSISSISNPMTSSKSSISSFGSGTSMGSNSIACGGGCGGSGGILGLGLGLGLGLDLTGGSRSRGACGNGGNSGNGNGGMGGGNGPCCGGCCGI</sequence>
<proteinExistence type="inferred from homology"/>
<keyword id="KW-1185">Reference proteome</keyword>
<accession>Q54UN1</accession>
<gene>
    <name type="primary">hssl38</name>
    <name type="ORF">DDB_G0280931</name>
</gene>
<name>HSL38_DICDI</name>
<dbReference type="EMBL" id="AAFI02000039">
    <property type="protein sequence ID" value="EAL67007.1"/>
    <property type="molecule type" value="Genomic_DNA"/>
</dbReference>
<dbReference type="RefSeq" id="XP_640990.1">
    <property type="nucleotide sequence ID" value="XM_635898.1"/>
</dbReference>
<dbReference type="FunCoup" id="Q54UN1">
    <property type="interactions" value="108"/>
</dbReference>
<dbReference type="PaxDb" id="44689-DDB0252788"/>
<dbReference type="EnsemblProtists" id="EAL67007">
    <property type="protein sequence ID" value="EAL67007"/>
    <property type="gene ID" value="DDB_G0280931"/>
</dbReference>
<dbReference type="GeneID" id="8622798"/>
<dbReference type="KEGG" id="ddi:DDB_G0280931"/>
<dbReference type="dictyBase" id="DDB_G0280931"/>
<dbReference type="HOGENOM" id="CLU_181850_0_0_1"/>
<dbReference type="InParanoid" id="Q54UN1"/>
<dbReference type="PRO" id="PR:Q54UN1"/>
<dbReference type="Proteomes" id="UP000002195">
    <property type="component" value="Chromosome 3"/>
</dbReference>
<dbReference type="GO" id="GO:0030587">
    <property type="term" value="P:sorocarp development"/>
    <property type="evidence" value="ECO:0000318"/>
    <property type="project" value="GO_Central"/>
</dbReference>
<dbReference type="InterPro" id="IPR050533">
    <property type="entry name" value="HssA/B-like_chaperone"/>
</dbReference>
<dbReference type="InterPro" id="IPR008455">
    <property type="entry name" value="HssA/B-related"/>
</dbReference>
<dbReference type="PANTHER" id="PTHR31059">
    <property type="entry name" value="HSSA/B-LIKE PROTEIN 1-RELATED-RELATED"/>
    <property type="match status" value="1"/>
</dbReference>
<dbReference type="PANTHER" id="PTHR31059:SF5">
    <property type="entry name" value="HSSA_B-LIKE PROTEIN 1-RELATED"/>
    <property type="match status" value="1"/>
</dbReference>
<dbReference type="Pfam" id="PF05710">
    <property type="entry name" value="Coiled"/>
    <property type="match status" value="1"/>
</dbReference>
<organism>
    <name type="scientific">Dictyostelium discoideum</name>
    <name type="common">Social amoeba</name>
    <dbReference type="NCBI Taxonomy" id="44689"/>
    <lineage>
        <taxon>Eukaryota</taxon>
        <taxon>Amoebozoa</taxon>
        <taxon>Evosea</taxon>
        <taxon>Eumycetozoa</taxon>
        <taxon>Dictyostelia</taxon>
        <taxon>Dictyosteliales</taxon>
        <taxon>Dictyosteliaceae</taxon>
        <taxon>Dictyostelium</taxon>
    </lineage>
</organism>
<protein>
    <recommendedName>
        <fullName>HssA/B-like protein 38</fullName>
    </recommendedName>
</protein>
<feature type="chain" id="PRO_0000330406" description="HssA/B-like protein 38">
    <location>
        <begin position="1"/>
        <end position="97"/>
    </location>
</feature>
<feature type="region of interest" description="Disordered" evidence="1">
    <location>
        <begin position="1"/>
        <end position="29"/>
    </location>
</feature>
<comment type="similarity">
    <text evidence="2">Belongs to the hssA/B family.</text>
</comment>
<evidence type="ECO:0000256" key="1">
    <source>
        <dbReference type="SAM" id="MobiDB-lite"/>
    </source>
</evidence>
<evidence type="ECO:0000305" key="2"/>
<reference key="1">
    <citation type="journal article" date="2005" name="Nature">
        <title>The genome of the social amoeba Dictyostelium discoideum.</title>
        <authorList>
            <person name="Eichinger L."/>
            <person name="Pachebat J.A."/>
            <person name="Gloeckner G."/>
            <person name="Rajandream M.A."/>
            <person name="Sucgang R."/>
            <person name="Berriman M."/>
            <person name="Song J."/>
            <person name="Olsen R."/>
            <person name="Szafranski K."/>
            <person name="Xu Q."/>
            <person name="Tunggal B."/>
            <person name="Kummerfeld S."/>
            <person name="Madera M."/>
            <person name="Konfortov B.A."/>
            <person name="Rivero F."/>
            <person name="Bankier A.T."/>
            <person name="Lehmann R."/>
            <person name="Hamlin N."/>
            <person name="Davies R."/>
            <person name="Gaudet P."/>
            <person name="Fey P."/>
            <person name="Pilcher K."/>
            <person name="Chen G."/>
            <person name="Saunders D."/>
            <person name="Sodergren E.J."/>
            <person name="Davis P."/>
            <person name="Kerhornou A."/>
            <person name="Nie X."/>
            <person name="Hall N."/>
            <person name="Anjard C."/>
            <person name="Hemphill L."/>
            <person name="Bason N."/>
            <person name="Farbrother P."/>
            <person name="Desany B."/>
            <person name="Just E."/>
            <person name="Morio T."/>
            <person name="Rost R."/>
            <person name="Churcher C.M."/>
            <person name="Cooper J."/>
            <person name="Haydock S."/>
            <person name="van Driessche N."/>
            <person name="Cronin A."/>
            <person name="Goodhead I."/>
            <person name="Muzny D.M."/>
            <person name="Mourier T."/>
            <person name="Pain A."/>
            <person name="Lu M."/>
            <person name="Harper D."/>
            <person name="Lindsay R."/>
            <person name="Hauser H."/>
            <person name="James K.D."/>
            <person name="Quiles M."/>
            <person name="Madan Babu M."/>
            <person name="Saito T."/>
            <person name="Buchrieser C."/>
            <person name="Wardroper A."/>
            <person name="Felder M."/>
            <person name="Thangavelu M."/>
            <person name="Johnson D."/>
            <person name="Knights A."/>
            <person name="Loulseged H."/>
            <person name="Mungall K.L."/>
            <person name="Oliver K."/>
            <person name="Price C."/>
            <person name="Quail M.A."/>
            <person name="Urushihara H."/>
            <person name="Hernandez J."/>
            <person name="Rabbinowitsch E."/>
            <person name="Steffen D."/>
            <person name="Sanders M."/>
            <person name="Ma J."/>
            <person name="Kohara Y."/>
            <person name="Sharp S."/>
            <person name="Simmonds M.N."/>
            <person name="Spiegler S."/>
            <person name="Tivey A."/>
            <person name="Sugano S."/>
            <person name="White B."/>
            <person name="Walker D."/>
            <person name="Woodward J.R."/>
            <person name="Winckler T."/>
            <person name="Tanaka Y."/>
            <person name="Shaulsky G."/>
            <person name="Schleicher M."/>
            <person name="Weinstock G.M."/>
            <person name="Rosenthal A."/>
            <person name="Cox E.C."/>
            <person name="Chisholm R.L."/>
            <person name="Gibbs R.A."/>
            <person name="Loomis W.F."/>
            <person name="Platzer M."/>
            <person name="Kay R.R."/>
            <person name="Williams J.G."/>
            <person name="Dear P.H."/>
            <person name="Noegel A.A."/>
            <person name="Barrell B.G."/>
            <person name="Kuspa A."/>
        </authorList>
    </citation>
    <scope>NUCLEOTIDE SEQUENCE [LARGE SCALE GENOMIC DNA]</scope>
    <source>
        <strain>AX4</strain>
    </source>
</reference>